<organism>
    <name type="scientific">Nocardia farcinica (strain IFM 10152)</name>
    <dbReference type="NCBI Taxonomy" id="247156"/>
    <lineage>
        <taxon>Bacteria</taxon>
        <taxon>Bacillati</taxon>
        <taxon>Actinomycetota</taxon>
        <taxon>Actinomycetes</taxon>
        <taxon>Mycobacteriales</taxon>
        <taxon>Nocardiaceae</taxon>
        <taxon>Nocardia</taxon>
    </lineage>
</organism>
<accession>Q5YS09</accession>
<protein>
    <recommendedName>
        <fullName evidence="2">Formamidopyrimidine-DNA glycosylase</fullName>
        <shortName evidence="2">Fapy-DNA glycosylase</shortName>
        <ecNumber evidence="2">3.2.2.23</ecNumber>
    </recommendedName>
    <alternativeName>
        <fullName evidence="2">DNA-(apurinic or apyrimidinic site) lyase MutM</fullName>
        <shortName evidence="2">AP lyase MutM</shortName>
        <ecNumber evidence="2">4.2.99.18</ecNumber>
    </alternativeName>
</protein>
<feature type="initiator methionine" description="Removed" evidence="1">
    <location>
        <position position="1"/>
    </location>
</feature>
<feature type="chain" id="PRO_0000228453" description="Formamidopyrimidine-DNA glycosylase">
    <location>
        <begin position="2"/>
        <end position="294"/>
    </location>
</feature>
<feature type="zinc finger region" description="FPG-type" evidence="2">
    <location>
        <begin position="255"/>
        <end position="289"/>
    </location>
</feature>
<feature type="active site" description="Schiff-base intermediate with DNA" evidence="2">
    <location>
        <position position="2"/>
    </location>
</feature>
<feature type="active site" description="Proton donor" evidence="2">
    <location>
        <position position="3"/>
    </location>
</feature>
<feature type="active site" description="Proton donor; for beta-elimination activity" evidence="2">
    <location>
        <position position="61"/>
    </location>
</feature>
<feature type="active site" description="Proton donor; for delta-elimination activity" evidence="2">
    <location>
        <position position="279"/>
    </location>
</feature>
<feature type="binding site" evidence="2">
    <location>
        <position position="104"/>
    </location>
    <ligand>
        <name>DNA</name>
        <dbReference type="ChEBI" id="CHEBI:16991"/>
    </ligand>
</feature>
<feature type="binding site" evidence="2">
    <location>
        <position position="123"/>
    </location>
    <ligand>
        <name>DNA</name>
        <dbReference type="ChEBI" id="CHEBI:16991"/>
    </ligand>
</feature>
<feature type="binding site" evidence="2">
    <location>
        <position position="169"/>
    </location>
    <ligand>
        <name>DNA</name>
        <dbReference type="ChEBI" id="CHEBI:16991"/>
    </ligand>
</feature>
<keyword id="KW-0227">DNA damage</keyword>
<keyword id="KW-0234">DNA repair</keyword>
<keyword id="KW-0238">DNA-binding</keyword>
<keyword id="KW-0326">Glycosidase</keyword>
<keyword id="KW-0378">Hydrolase</keyword>
<keyword id="KW-0456">Lyase</keyword>
<keyword id="KW-0479">Metal-binding</keyword>
<keyword id="KW-0511">Multifunctional enzyme</keyword>
<keyword id="KW-1185">Reference proteome</keyword>
<keyword id="KW-0862">Zinc</keyword>
<keyword id="KW-0863">Zinc-finger</keyword>
<gene>
    <name evidence="2" type="primary">mutM</name>
    <name evidence="2" type="synonym">fpg</name>
    <name type="ordered locus">NFA_41830</name>
</gene>
<sequence length="294" mass="32054">MPELPEVEVVRRGLAEHVAGRVVGAVTITHPRSVRRHLAGSADLAARMTGRRVRAAQRRGKYLWLTFDEPGAADETALDAALVVHLGMSGQMLVQPAAAPVEKHAHIRAALDDGSELRFVDQRTFGGWALAPLAEVDGSLVPEPVAHIARDPLDPRFDAESVVAAIRAKNSEIKRVLLDQTVVSGIGNIYADESLWRAGINGNRLASGLTRPAVRRLLAEVRAVMLEALAAGGTSFDALYVNVNGQSGYFERALAVYGRQDEPCRRCGAPIVREKFMNRSSYSCPRCQPRPRRR</sequence>
<dbReference type="EC" id="3.2.2.23" evidence="2"/>
<dbReference type="EC" id="4.2.99.18" evidence="2"/>
<dbReference type="EMBL" id="AP006618">
    <property type="protein sequence ID" value="BAD59032.1"/>
    <property type="molecule type" value="Genomic_DNA"/>
</dbReference>
<dbReference type="RefSeq" id="WP_011210717.1">
    <property type="nucleotide sequence ID" value="NC_006361.1"/>
</dbReference>
<dbReference type="SMR" id="Q5YS09"/>
<dbReference type="STRING" id="247156.NFA_41830"/>
<dbReference type="GeneID" id="61134818"/>
<dbReference type="KEGG" id="nfa:NFA_41830"/>
<dbReference type="eggNOG" id="COG0266">
    <property type="taxonomic scope" value="Bacteria"/>
</dbReference>
<dbReference type="HOGENOM" id="CLU_038423_1_2_11"/>
<dbReference type="OrthoDB" id="9800855at2"/>
<dbReference type="Proteomes" id="UP000006820">
    <property type="component" value="Chromosome"/>
</dbReference>
<dbReference type="GO" id="GO:0034039">
    <property type="term" value="F:8-oxo-7,8-dihydroguanine DNA N-glycosylase activity"/>
    <property type="evidence" value="ECO:0007669"/>
    <property type="project" value="TreeGrafter"/>
</dbReference>
<dbReference type="GO" id="GO:0140078">
    <property type="term" value="F:class I DNA-(apurinic or apyrimidinic site) endonuclease activity"/>
    <property type="evidence" value="ECO:0007669"/>
    <property type="project" value="UniProtKB-EC"/>
</dbReference>
<dbReference type="GO" id="GO:0003684">
    <property type="term" value="F:damaged DNA binding"/>
    <property type="evidence" value="ECO:0007669"/>
    <property type="project" value="InterPro"/>
</dbReference>
<dbReference type="GO" id="GO:0008270">
    <property type="term" value="F:zinc ion binding"/>
    <property type="evidence" value="ECO:0007669"/>
    <property type="project" value="UniProtKB-UniRule"/>
</dbReference>
<dbReference type="GO" id="GO:0006284">
    <property type="term" value="P:base-excision repair"/>
    <property type="evidence" value="ECO:0007669"/>
    <property type="project" value="InterPro"/>
</dbReference>
<dbReference type="CDD" id="cd08966">
    <property type="entry name" value="EcFpg-like_N"/>
    <property type="match status" value="1"/>
</dbReference>
<dbReference type="FunFam" id="1.10.8.50:FF:000003">
    <property type="entry name" value="Formamidopyrimidine-DNA glycosylase"/>
    <property type="match status" value="1"/>
</dbReference>
<dbReference type="FunFam" id="3.20.190.10:FF:000006">
    <property type="entry name" value="Formamidopyrimidine-DNA glycosylase"/>
    <property type="match status" value="1"/>
</dbReference>
<dbReference type="Gene3D" id="1.10.8.50">
    <property type="match status" value="1"/>
</dbReference>
<dbReference type="Gene3D" id="3.20.190.10">
    <property type="entry name" value="MutM-like, N-terminal"/>
    <property type="match status" value="1"/>
</dbReference>
<dbReference type="HAMAP" id="MF_00103">
    <property type="entry name" value="Fapy_DNA_glycosyl"/>
    <property type="match status" value="1"/>
</dbReference>
<dbReference type="InterPro" id="IPR015886">
    <property type="entry name" value="DNA_glyclase/AP_lyase_DNA-bd"/>
</dbReference>
<dbReference type="InterPro" id="IPR020629">
    <property type="entry name" value="Formamido-pyr_DNA_Glyclase"/>
</dbReference>
<dbReference type="InterPro" id="IPR012319">
    <property type="entry name" value="FPG_cat"/>
</dbReference>
<dbReference type="InterPro" id="IPR035937">
    <property type="entry name" value="MutM-like_N-ter"/>
</dbReference>
<dbReference type="InterPro" id="IPR010979">
    <property type="entry name" value="Ribosomal_uS13-like_H2TH"/>
</dbReference>
<dbReference type="InterPro" id="IPR000214">
    <property type="entry name" value="Znf_DNA_glyclase/AP_lyase"/>
</dbReference>
<dbReference type="InterPro" id="IPR010663">
    <property type="entry name" value="Znf_FPG/IleRS"/>
</dbReference>
<dbReference type="NCBIfam" id="TIGR00577">
    <property type="entry name" value="fpg"/>
    <property type="match status" value="1"/>
</dbReference>
<dbReference type="NCBIfam" id="NF002211">
    <property type="entry name" value="PRK01103.1"/>
    <property type="match status" value="1"/>
</dbReference>
<dbReference type="PANTHER" id="PTHR22993">
    <property type="entry name" value="FORMAMIDOPYRIMIDINE-DNA GLYCOSYLASE"/>
    <property type="match status" value="1"/>
</dbReference>
<dbReference type="PANTHER" id="PTHR22993:SF9">
    <property type="entry name" value="FORMAMIDOPYRIMIDINE-DNA GLYCOSYLASE"/>
    <property type="match status" value="1"/>
</dbReference>
<dbReference type="Pfam" id="PF01149">
    <property type="entry name" value="Fapy_DNA_glyco"/>
    <property type="match status" value="1"/>
</dbReference>
<dbReference type="Pfam" id="PF06831">
    <property type="entry name" value="H2TH"/>
    <property type="match status" value="1"/>
</dbReference>
<dbReference type="Pfam" id="PF06827">
    <property type="entry name" value="zf-FPG_IleRS"/>
    <property type="match status" value="1"/>
</dbReference>
<dbReference type="SMART" id="SM00898">
    <property type="entry name" value="Fapy_DNA_glyco"/>
    <property type="match status" value="1"/>
</dbReference>
<dbReference type="SMART" id="SM01232">
    <property type="entry name" value="H2TH"/>
    <property type="match status" value="1"/>
</dbReference>
<dbReference type="SUPFAM" id="SSF57716">
    <property type="entry name" value="Glucocorticoid receptor-like (DNA-binding domain)"/>
    <property type="match status" value="1"/>
</dbReference>
<dbReference type="SUPFAM" id="SSF81624">
    <property type="entry name" value="N-terminal domain of MutM-like DNA repair proteins"/>
    <property type="match status" value="1"/>
</dbReference>
<dbReference type="SUPFAM" id="SSF46946">
    <property type="entry name" value="S13-like H2TH domain"/>
    <property type="match status" value="1"/>
</dbReference>
<dbReference type="PROSITE" id="PS51068">
    <property type="entry name" value="FPG_CAT"/>
    <property type="match status" value="1"/>
</dbReference>
<dbReference type="PROSITE" id="PS51066">
    <property type="entry name" value="ZF_FPG_2"/>
    <property type="match status" value="1"/>
</dbReference>
<proteinExistence type="inferred from homology"/>
<comment type="function">
    <text evidence="2">Involved in base excision repair of DNA damaged by oxidation or by mutagenic agents. Acts as a DNA glycosylase that recognizes and removes damaged bases. Has a preference for oxidized purines, such as 7,8-dihydro-8-oxoguanine (8-oxoG). Has AP (apurinic/apyrimidinic) lyase activity and introduces nicks in the DNA strand. Cleaves the DNA backbone by beta-delta elimination to generate a single-strand break at the site of the removed base with both 3'- and 5'-phosphates.</text>
</comment>
<comment type="catalytic activity">
    <reaction evidence="2">
        <text>Hydrolysis of DNA containing ring-opened 7-methylguanine residues, releasing 2,6-diamino-4-hydroxy-5-(N-methyl)formamidopyrimidine.</text>
        <dbReference type="EC" id="3.2.2.23"/>
    </reaction>
</comment>
<comment type="catalytic activity">
    <reaction evidence="2">
        <text>2'-deoxyribonucleotide-(2'-deoxyribose 5'-phosphate)-2'-deoxyribonucleotide-DNA = a 3'-end 2'-deoxyribonucleotide-(2,3-dehydro-2,3-deoxyribose 5'-phosphate)-DNA + a 5'-end 5'-phospho-2'-deoxyribonucleoside-DNA + H(+)</text>
        <dbReference type="Rhea" id="RHEA:66592"/>
        <dbReference type="Rhea" id="RHEA-COMP:13180"/>
        <dbReference type="Rhea" id="RHEA-COMP:16897"/>
        <dbReference type="Rhea" id="RHEA-COMP:17067"/>
        <dbReference type="ChEBI" id="CHEBI:15378"/>
        <dbReference type="ChEBI" id="CHEBI:136412"/>
        <dbReference type="ChEBI" id="CHEBI:157695"/>
        <dbReference type="ChEBI" id="CHEBI:167181"/>
        <dbReference type="EC" id="4.2.99.18"/>
    </reaction>
</comment>
<comment type="cofactor">
    <cofactor evidence="2">
        <name>Zn(2+)</name>
        <dbReference type="ChEBI" id="CHEBI:29105"/>
    </cofactor>
    <text evidence="2">Binds 1 zinc ion per subunit.</text>
</comment>
<comment type="subunit">
    <text evidence="2">Monomer.</text>
</comment>
<comment type="similarity">
    <text evidence="2">Belongs to the FPG family.</text>
</comment>
<evidence type="ECO:0000250" key="1"/>
<evidence type="ECO:0000255" key="2">
    <source>
        <dbReference type="HAMAP-Rule" id="MF_00103"/>
    </source>
</evidence>
<name>FPG_NOCFA</name>
<reference key="1">
    <citation type="journal article" date="2004" name="Proc. Natl. Acad. Sci. U.S.A.">
        <title>The complete genomic sequence of Nocardia farcinica IFM 10152.</title>
        <authorList>
            <person name="Ishikawa J."/>
            <person name="Yamashita A."/>
            <person name="Mikami Y."/>
            <person name="Hoshino Y."/>
            <person name="Kurita H."/>
            <person name="Hotta K."/>
            <person name="Shiba T."/>
            <person name="Hattori M."/>
        </authorList>
    </citation>
    <scope>NUCLEOTIDE SEQUENCE [LARGE SCALE GENOMIC DNA]</scope>
    <source>
        <strain>IFM 10152</strain>
    </source>
</reference>